<organism>
    <name type="scientific">Arthrobacter sp. (strain FB24)</name>
    <dbReference type="NCBI Taxonomy" id="290399"/>
    <lineage>
        <taxon>Bacteria</taxon>
        <taxon>Bacillati</taxon>
        <taxon>Actinomycetota</taxon>
        <taxon>Actinomycetes</taxon>
        <taxon>Micrococcales</taxon>
        <taxon>Micrococcaceae</taxon>
        <taxon>Arthrobacter</taxon>
    </lineage>
</organism>
<dbReference type="EC" id="2.1.2.9" evidence="1"/>
<dbReference type="EMBL" id="CP000454">
    <property type="protein sequence ID" value="ABK03065.1"/>
    <property type="molecule type" value="Genomic_DNA"/>
</dbReference>
<dbReference type="RefSeq" id="WP_011691531.1">
    <property type="nucleotide sequence ID" value="NC_008541.1"/>
</dbReference>
<dbReference type="SMR" id="A0JVJ5"/>
<dbReference type="STRING" id="290399.Arth_1671"/>
<dbReference type="KEGG" id="art:Arth_1671"/>
<dbReference type="eggNOG" id="COG0223">
    <property type="taxonomic scope" value="Bacteria"/>
</dbReference>
<dbReference type="HOGENOM" id="CLU_033347_1_0_11"/>
<dbReference type="OrthoDB" id="9802815at2"/>
<dbReference type="Proteomes" id="UP000000754">
    <property type="component" value="Chromosome"/>
</dbReference>
<dbReference type="GO" id="GO:0005829">
    <property type="term" value="C:cytosol"/>
    <property type="evidence" value="ECO:0007669"/>
    <property type="project" value="TreeGrafter"/>
</dbReference>
<dbReference type="GO" id="GO:0004479">
    <property type="term" value="F:methionyl-tRNA formyltransferase activity"/>
    <property type="evidence" value="ECO:0007669"/>
    <property type="project" value="UniProtKB-UniRule"/>
</dbReference>
<dbReference type="CDD" id="cd08646">
    <property type="entry name" value="FMT_core_Met-tRNA-FMT_N"/>
    <property type="match status" value="1"/>
</dbReference>
<dbReference type="CDD" id="cd08704">
    <property type="entry name" value="Met_tRNA_FMT_C"/>
    <property type="match status" value="1"/>
</dbReference>
<dbReference type="FunFam" id="3.40.50.12230:FF:000001">
    <property type="entry name" value="Methionyl-tRNA formyltransferase"/>
    <property type="match status" value="1"/>
</dbReference>
<dbReference type="Gene3D" id="3.40.50.12230">
    <property type="match status" value="1"/>
</dbReference>
<dbReference type="HAMAP" id="MF_00182">
    <property type="entry name" value="Formyl_trans"/>
    <property type="match status" value="1"/>
</dbReference>
<dbReference type="InterPro" id="IPR005794">
    <property type="entry name" value="Fmt"/>
</dbReference>
<dbReference type="InterPro" id="IPR005793">
    <property type="entry name" value="Formyl_trans_C"/>
</dbReference>
<dbReference type="InterPro" id="IPR002376">
    <property type="entry name" value="Formyl_transf_N"/>
</dbReference>
<dbReference type="InterPro" id="IPR036477">
    <property type="entry name" value="Formyl_transf_N_sf"/>
</dbReference>
<dbReference type="InterPro" id="IPR011034">
    <property type="entry name" value="Formyl_transferase-like_C_sf"/>
</dbReference>
<dbReference type="InterPro" id="IPR044135">
    <property type="entry name" value="Met-tRNA-FMT_C"/>
</dbReference>
<dbReference type="InterPro" id="IPR041711">
    <property type="entry name" value="Met-tRNA-FMT_N"/>
</dbReference>
<dbReference type="NCBIfam" id="TIGR00460">
    <property type="entry name" value="fmt"/>
    <property type="match status" value="1"/>
</dbReference>
<dbReference type="PANTHER" id="PTHR11138">
    <property type="entry name" value="METHIONYL-TRNA FORMYLTRANSFERASE"/>
    <property type="match status" value="1"/>
</dbReference>
<dbReference type="PANTHER" id="PTHR11138:SF5">
    <property type="entry name" value="METHIONYL-TRNA FORMYLTRANSFERASE, MITOCHONDRIAL"/>
    <property type="match status" value="1"/>
</dbReference>
<dbReference type="Pfam" id="PF02911">
    <property type="entry name" value="Formyl_trans_C"/>
    <property type="match status" value="1"/>
</dbReference>
<dbReference type="Pfam" id="PF00551">
    <property type="entry name" value="Formyl_trans_N"/>
    <property type="match status" value="1"/>
</dbReference>
<dbReference type="SUPFAM" id="SSF50486">
    <property type="entry name" value="FMT C-terminal domain-like"/>
    <property type="match status" value="1"/>
</dbReference>
<dbReference type="SUPFAM" id="SSF53328">
    <property type="entry name" value="Formyltransferase"/>
    <property type="match status" value="1"/>
</dbReference>
<sequence length="306" mass="31695">MRVLFAGTPAVAVPSLDALVQAGFDVVAVLTRPDAPVGRKRVLTPSPVAARAAELGIEVIHAAKVDAEVTARIAAAAPDAAAIVAYGGLIPRAALDVPRHGWINLHFSLLPAWRGAAPVQRAVMAGDDITGAVTFLLEEGLDTGPVFGTLTESVRPDDTSGELLERLSHSGAALLAQTLSAIEAGRAVAVPQSGDVSLAPKLGIDDGRIDWHEPALAIGRRARGVTPEPGAWTTLDGQRVKLEPVALRTDAPALQPGQVLLDGKSVLVGTGSHPVELTRIQPSGKKMMAAADWARGQVALEGVVFE</sequence>
<name>FMT_ARTS2</name>
<feature type="chain" id="PRO_1000020016" description="Methionyl-tRNA formyltransferase">
    <location>
        <begin position="1"/>
        <end position="306"/>
    </location>
</feature>
<feature type="binding site" evidence="1">
    <location>
        <begin position="108"/>
        <end position="111"/>
    </location>
    <ligand>
        <name>(6S)-5,6,7,8-tetrahydrofolate</name>
        <dbReference type="ChEBI" id="CHEBI:57453"/>
    </ligand>
</feature>
<comment type="function">
    <text evidence="1">Attaches a formyl group to the free amino group of methionyl-tRNA(fMet). The formyl group appears to play a dual role in the initiator identity of N-formylmethionyl-tRNA by promoting its recognition by IF2 and preventing the misappropriation of this tRNA by the elongation apparatus.</text>
</comment>
<comment type="catalytic activity">
    <reaction evidence="1">
        <text>L-methionyl-tRNA(fMet) + (6R)-10-formyltetrahydrofolate = N-formyl-L-methionyl-tRNA(fMet) + (6S)-5,6,7,8-tetrahydrofolate + H(+)</text>
        <dbReference type="Rhea" id="RHEA:24380"/>
        <dbReference type="Rhea" id="RHEA-COMP:9952"/>
        <dbReference type="Rhea" id="RHEA-COMP:9953"/>
        <dbReference type="ChEBI" id="CHEBI:15378"/>
        <dbReference type="ChEBI" id="CHEBI:57453"/>
        <dbReference type="ChEBI" id="CHEBI:78530"/>
        <dbReference type="ChEBI" id="CHEBI:78844"/>
        <dbReference type="ChEBI" id="CHEBI:195366"/>
        <dbReference type="EC" id="2.1.2.9"/>
    </reaction>
</comment>
<comment type="similarity">
    <text evidence="1">Belongs to the Fmt family.</text>
</comment>
<accession>A0JVJ5</accession>
<reference key="1">
    <citation type="journal article" date="2013" name="Stand. Genomic Sci.">
        <title>Complete genome sequence of Arthrobacter sp. strain FB24.</title>
        <authorList>
            <person name="Nakatsu C.H."/>
            <person name="Barabote R."/>
            <person name="Thompson S."/>
            <person name="Bruce D."/>
            <person name="Detter C."/>
            <person name="Brettin T."/>
            <person name="Han C."/>
            <person name="Beasley F."/>
            <person name="Chen W."/>
            <person name="Konopka A."/>
            <person name="Xie G."/>
        </authorList>
    </citation>
    <scope>NUCLEOTIDE SEQUENCE [LARGE SCALE GENOMIC DNA]</scope>
    <source>
        <strain>FB24</strain>
    </source>
</reference>
<keyword id="KW-0648">Protein biosynthesis</keyword>
<keyword id="KW-1185">Reference proteome</keyword>
<keyword id="KW-0808">Transferase</keyword>
<proteinExistence type="inferred from homology"/>
<gene>
    <name evidence="1" type="primary">fmt</name>
    <name type="ordered locus">Arth_1671</name>
</gene>
<evidence type="ECO:0000255" key="1">
    <source>
        <dbReference type="HAMAP-Rule" id="MF_00182"/>
    </source>
</evidence>
<protein>
    <recommendedName>
        <fullName evidence="1">Methionyl-tRNA formyltransferase</fullName>
        <ecNumber evidence="1">2.1.2.9</ecNumber>
    </recommendedName>
</protein>